<dbReference type="EC" id="3.4.21.-"/>
<dbReference type="EMBL" id="J04635">
    <property type="protein sequence ID" value="AAA36833.1"/>
    <property type="molecule type" value="mRNA"/>
</dbReference>
<dbReference type="PIR" id="A32869">
    <property type="entry name" value="A32869"/>
</dbReference>
<dbReference type="SMR" id="P14417"/>
<dbReference type="FunCoup" id="P14417">
    <property type="interactions" value="8"/>
</dbReference>
<dbReference type="STRING" id="9544.ENSMMUP00000021286"/>
<dbReference type="MEROPS" id="S01.999"/>
<dbReference type="PaxDb" id="9544-ENSMMUP00000021286"/>
<dbReference type="eggNOG" id="ENOG502QVNP">
    <property type="taxonomic scope" value="Eukaryota"/>
</dbReference>
<dbReference type="InParanoid" id="P14417"/>
<dbReference type="Proteomes" id="UP000006718">
    <property type="component" value="Unassembled WGS sequence"/>
</dbReference>
<dbReference type="GO" id="GO:0005615">
    <property type="term" value="C:extracellular space"/>
    <property type="evidence" value="ECO:0000318"/>
    <property type="project" value="GO_Central"/>
</dbReference>
<dbReference type="GO" id="GO:0004175">
    <property type="term" value="F:endopeptidase activity"/>
    <property type="evidence" value="ECO:0000318"/>
    <property type="project" value="GO_Central"/>
</dbReference>
<dbReference type="GO" id="GO:0004252">
    <property type="term" value="F:serine-type endopeptidase activity"/>
    <property type="evidence" value="ECO:0007669"/>
    <property type="project" value="InterPro"/>
</dbReference>
<dbReference type="GO" id="GO:0005102">
    <property type="term" value="F:signaling receptor binding"/>
    <property type="evidence" value="ECO:0000318"/>
    <property type="project" value="GO_Central"/>
</dbReference>
<dbReference type="GO" id="GO:0006869">
    <property type="term" value="P:lipid transport"/>
    <property type="evidence" value="ECO:0007669"/>
    <property type="project" value="UniProtKB-KW"/>
</dbReference>
<dbReference type="GO" id="GO:0006508">
    <property type="term" value="P:proteolysis"/>
    <property type="evidence" value="ECO:0000318"/>
    <property type="project" value="GO_Central"/>
</dbReference>
<dbReference type="CDD" id="cd00108">
    <property type="entry name" value="KR"/>
    <property type="match status" value="10"/>
</dbReference>
<dbReference type="CDD" id="cd00190">
    <property type="entry name" value="Tryp_SPc"/>
    <property type="match status" value="1"/>
</dbReference>
<dbReference type="FunFam" id="2.40.20.10:FF:000005">
    <property type="entry name" value="Plasminogen"/>
    <property type="match status" value="10"/>
</dbReference>
<dbReference type="FunFam" id="2.40.10.10:FF:000003">
    <property type="entry name" value="Transmembrane serine protease 3"/>
    <property type="match status" value="1"/>
</dbReference>
<dbReference type="Gene3D" id="2.40.20.10">
    <property type="entry name" value="Plasminogen Kringle 4"/>
    <property type="match status" value="10"/>
</dbReference>
<dbReference type="Gene3D" id="2.40.10.10">
    <property type="entry name" value="Trypsin-like serine proteases"/>
    <property type="match status" value="1"/>
</dbReference>
<dbReference type="InterPro" id="IPR000001">
    <property type="entry name" value="Kringle"/>
</dbReference>
<dbReference type="InterPro" id="IPR013806">
    <property type="entry name" value="Kringle-like"/>
</dbReference>
<dbReference type="InterPro" id="IPR018056">
    <property type="entry name" value="Kringle_CS"/>
</dbReference>
<dbReference type="InterPro" id="IPR038178">
    <property type="entry name" value="Kringle_sf"/>
</dbReference>
<dbReference type="InterPro" id="IPR009003">
    <property type="entry name" value="Peptidase_S1_PA"/>
</dbReference>
<dbReference type="InterPro" id="IPR043504">
    <property type="entry name" value="Peptidase_S1_PA_chymotrypsin"/>
</dbReference>
<dbReference type="InterPro" id="IPR001314">
    <property type="entry name" value="Peptidase_S1A"/>
</dbReference>
<dbReference type="InterPro" id="IPR050759">
    <property type="entry name" value="Serine_protease_kringle"/>
</dbReference>
<dbReference type="InterPro" id="IPR001254">
    <property type="entry name" value="Trypsin_dom"/>
</dbReference>
<dbReference type="PANTHER" id="PTHR24261:SF2">
    <property type="entry name" value="LIPOPROTEIN(A)"/>
    <property type="match status" value="1"/>
</dbReference>
<dbReference type="PANTHER" id="PTHR24261">
    <property type="entry name" value="PLASMINOGEN-RELATED"/>
    <property type="match status" value="1"/>
</dbReference>
<dbReference type="Pfam" id="PF00051">
    <property type="entry name" value="Kringle"/>
    <property type="match status" value="10"/>
</dbReference>
<dbReference type="Pfam" id="PF00089">
    <property type="entry name" value="Trypsin"/>
    <property type="match status" value="1"/>
</dbReference>
<dbReference type="PRINTS" id="PR00722">
    <property type="entry name" value="CHYMOTRYPSIN"/>
</dbReference>
<dbReference type="PRINTS" id="PR00018">
    <property type="entry name" value="KRINGLE"/>
</dbReference>
<dbReference type="SMART" id="SM00130">
    <property type="entry name" value="KR"/>
    <property type="match status" value="10"/>
</dbReference>
<dbReference type="SMART" id="SM00020">
    <property type="entry name" value="Tryp_SPc"/>
    <property type="match status" value="1"/>
</dbReference>
<dbReference type="SUPFAM" id="SSF57440">
    <property type="entry name" value="Kringle-like"/>
    <property type="match status" value="10"/>
</dbReference>
<dbReference type="SUPFAM" id="SSF50494">
    <property type="entry name" value="Trypsin-like serine proteases"/>
    <property type="match status" value="1"/>
</dbReference>
<dbReference type="PROSITE" id="PS00021">
    <property type="entry name" value="KRINGLE_1"/>
    <property type="match status" value="10"/>
</dbReference>
<dbReference type="PROSITE" id="PS50070">
    <property type="entry name" value="KRINGLE_2"/>
    <property type="match status" value="10"/>
</dbReference>
<dbReference type="PROSITE" id="PS50240">
    <property type="entry name" value="TRYPSIN_DOM"/>
    <property type="match status" value="1"/>
</dbReference>
<gene>
    <name type="primary">LPA</name>
</gene>
<reference key="1">
    <citation type="journal article" date="1989" name="J. Biol. Chem.">
        <title>Rhesus monkey apolipoprotein(a). Sequence, evolution, and sites of synthesis.</title>
        <authorList>
            <person name="Tomlinson J.E."/>
            <person name="McLean J.W."/>
            <person name="Lawn R.M."/>
        </authorList>
    </citation>
    <scope>NUCLEOTIDE SEQUENCE [MRNA]</scope>
</reference>
<name>APOA_MACMU</name>
<organism>
    <name type="scientific">Macaca mulatta</name>
    <name type="common">Rhesus macaque</name>
    <dbReference type="NCBI Taxonomy" id="9544"/>
    <lineage>
        <taxon>Eukaryota</taxon>
        <taxon>Metazoa</taxon>
        <taxon>Chordata</taxon>
        <taxon>Craniata</taxon>
        <taxon>Vertebrata</taxon>
        <taxon>Euteleostomi</taxon>
        <taxon>Mammalia</taxon>
        <taxon>Eutheria</taxon>
        <taxon>Euarchontoglires</taxon>
        <taxon>Primates</taxon>
        <taxon>Haplorrhini</taxon>
        <taxon>Catarrhini</taxon>
        <taxon>Cercopithecidae</taxon>
        <taxon>Cercopithecinae</taxon>
        <taxon>Macaca</taxon>
    </lineage>
</organism>
<protein>
    <recommendedName>
        <fullName>Apolipoprotein(a)</fullName>
        <shortName>Apo(a)</shortName>
        <shortName>Lp(a)</shortName>
        <ecNumber>3.4.21.-</ecNumber>
    </recommendedName>
</protein>
<comment type="function">
    <text>Apo(a) is the main constituent of lipoprotein(a) (Lp(a)). It has serine proteinase activity and is able of autoproteolysis. Inhibits tissue-type plasminogen activator 1. Lp(a) may be a ligand for megalin/Gp 330.</text>
</comment>
<comment type="subunit">
    <text evidence="1">Disulfide-linked to apo-B100. Binds to fibronectin and decorin (By similarity).</text>
</comment>
<comment type="PTM">
    <text evidence="1">N- and O-glycosylated.</text>
</comment>
<comment type="disease">
    <text evidence="5">Elevated plasma concentrations of apo(a) and its naturally occurring proteolytic fragments are correlated with atherosclerosis. Homology with plasminogen kringles IV and V is thought to underlie the atherogenicity of the protein, because the fragments are competing with plasminogen for fibrin(ogen) binding.</text>
</comment>
<comment type="miscellaneous">
    <text evidence="1">Apo(a) is known to be proteolytically cleaved, leading to the formation of the so-called mini-Lp(a). Apo(a) fragments accumulate in atherosclerotic lesions, where they may promote thrombogenesis. O-glycosylation may limit the extent of proteolytic fragmentation (By similarity).</text>
</comment>
<comment type="similarity">
    <text evidence="3">Belongs to the peptidase S1 family. Plasminogen subfamily.</text>
</comment>
<keyword id="KW-0065">Atherosclerosis</keyword>
<keyword id="KW-1015">Disulfide bond</keyword>
<keyword id="KW-0325">Glycoprotein</keyword>
<keyword id="KW-0378">Hydrolase</keyword>
<keyword id="KW-0420">Kringle</keyword>
<keyword id="KW-0445">Lipid transport</keyword>
<keyword id="KW-0645">Protease</keyword>
<keyword id="KW-1185">Reference proteome</keyword>
<keyword id="KW-0677">Repeat</keyword>
<keyword id="KW-0720">Serine protease</keyword>
<keyword id="KW-0813">Transport</keyword>
<feature type="chain" id="PRO_0000088707" description="Apolipoprotein(a)">
    <location>
        <begin position="1" status="less than"/>
        <end position="1420"/>
    </location>
</feature>
<feature type="domain" description="Kringle 1" evidence="2">
    <location>
        <begin position="49"/>
        <end position="127"/>
    </location>
</feature>
<feature type="domain" description="Kringle 2" evidence="2">
    <location>
        <begin position="163"/>
        <end position="241"/>
    </location>
</feature>
<feature type="domain" description="Kringle 3" evidence="2">
    <location>
        <begin position="277"/>
        <end position="355"/>
    </location>
</feature>
<feature type="domain" description="Kringle 4" evidence="2">
    <location>
        <begin position="391"/>
        <end position="469"/>
    </location>
</feature>
<feature type="domain" description="Kringle 5" evidence="2">
    <location>
        <begin position="505"/>
        <end position="583"/>
    </location>
</feature>
<feature type="domain" description="Kringle 6" evidence="2">
    <location>
        <begin position="619"/>
        <end position="697"/>
    </location>
</feature>
<feature type="domain" description="Kringle 7" evidence="2">
    <location>
        <begin position="725"/>
        <end position="803"/>
    </location>
</feature>
<feature type="domain" description="Kringle 8" evidence="2">
    <location>
        <begin position="839"/>
        <end position="917"/>
    </location>
</feature>
<feature type="domain" description="Kringle 9" evidence="2">
    <location>
        <begin position="953"/>
        <end position="1031"/>
    </location>
</feature>
<feature type="domain" description="Kringle 10" evidence="2">
    <location>
        <begin position="1067"/>
        <end position="1145"/>
    </location>
</feature>
<feature type="domain" description="Peptidase S1" evidence="3">
    <location>
        <begin position="1191"/>
        <end position="1418"/>
    </location>
</feature>
<feature type="region of interest" description="Disordered" evidence="4">
    <location>
        <begin position="19"/>
        <end position="46"/>
    </location>
</feature>
<feature type="region of interest" description="Disordered" evidence="4">
    <location>
        <begin position="598"/>
        <end position="617"/>
    </location>
</feature>
<feature type="compositionally biased region" description="Low complexity" evidence="4">
    <location>
        <begin position="19"/>
        <end position="30"/>
    </location>
</feature>
<feature type="compositionally biased region" description="Polar residues" evidence="4">
    <location>
        <begin position="600"/>
        <end position="616"/>
    </location>
</feature>
<feature type="disulfide bond" evidence="1">
    <location>
        <begin position="50"/>
        <end position="127"/>
    </location>
</feature>
<feature type="disulfide bond" evidence="1">
    <location>
        <begin position="71"/>
        <end position="110"/>
    </location>
</feature>
<feature type="disulfide bond" evidence="1">
    <location>
        <begin position="99"/>
        <end position="122"/>
    </location>
</feature>
<feature type="disulfide bond" evidence="1">
    <location>
        <begin position="164"/>
        <end position="241"/>
    </location>
</feature>
<feature type="disulfide bond" evidence="1">
    <location>
        <begin position="185"/>
        <end position="224"/>
    </location>
</feature>
<feature type="disulfide bond" evidence="1">
    <location>
        <begin position="213"/>
        <end position="236"/>
    </location>
</feature>
<feature type="disulfide bond" evidence="1">
    <location>
        <begin position="278"/>
        <end position="355"/>
    </location>
</feature>
<feature type="disulfide bond" evidence="1">
    <location>
        <begin position="299"/>
        <end position="338"/>
    </location>
</feature>
<feature type="disulfide bond" evidence="1">
    <location>
        <begin position="327"/>
        <end position="350"/>
    </location>
</feature>
<feature type="disulfide bond" evidence="1">
    <location>
        <begin position="392"/>
        <end position="469"/>
    </location>
</feature>
<feature type="disulfide bond" evidence="1">
    <location>
        <begin position="413"/>
        <end position="452"/>
    </location>
</feature>
<feature type="disulfide bond" evidence="1">
    <location>
        <begin position="441"/>
        <end position="464"/>
    </location>
</feature>
<feature type="disulfide bond" evidence="1">
    <location>
        <begin position="506"/>
        <end position="583"/>
    </location>
</feature>
<feature type="disulfide bond" evidence="1">
    <location>
        <begin position="527"/>
        <end position="566"/>
    </location>
</feature>
<feature type="disulfide bond" evidence="1">
    <location>
        <begin position="555"/>
        <end position="578"/>
    </location>
</feature>
<feature type="disulfide bond" evidence="1">
    <location>
        <begin position="620"/>
        <end position="697"/>
    </location>
</feature>
<feature type="disulfide bond" evidence="1">
    <location>
        <begin position="641"/>
        <end position="680"/>
    </location>
</feature>
<feature type="disulfide bond" evidence="1">
    <location>
        <begin position="669"/>
        <end position="692"/>
    </location>
</feature>
<feature type="disulfide bond" evidence="1">
    <location>
        <begin position="726"/>
        <end position="803"/>
    </location>
</feature>
<feature type="disulfide bond" evidence="1">
    <location>
        <begin position="747"/>
        <end position="786"/>
    </location>
</feature>
<feature type="disulfide bond" evidence="1">
    <location>
        <begin position="775"/>
        <end position="798"/>
    </location>
</feature>
<feature type="disulfide bond" evidence="1">
    <location>
        <begin position="840"/>
        <end position="917"/>
    </location>
</feature>
<feature type="disulfide bond" evidence="1">
    <location>
        <begin position="861"/>
        <end position="900"/>
    </location>
</feature>
<feature type="disulfide bond" evidence="1">
    <location>
        <begin position="889"/>
        <end position="912"/>
    </location>
</feature>
<feature type="disulfide bond" evidence="1">
    <location>
        <begin position="954"/>
        <end position="1031"/>
    </location>
</feature>
<feature type="disulfide bond" evidence="1">
    <location>
        <begin position="975"/>
        <end position="1014"/>
    </location>
</feature>
<feature type="disulfide bond" evidence="1">
    <location>
        <begin position="1003"/>
        <end position="1026"/>
    </location>
</feature>
<feature type="disulfide bond" evidence="1">
    <location>
        <begin position="1068"/>
        <end position="1145"/>
    </location>
</feature>
<feature type="disulfide bond" evidence="1">
    <location>
        <begin position="1089"/>
        <end position="1128"/>
    </location>
</feature>
<feature type="disulfide bond" evidence="1">
    <location>
        <begin position="1117"/>
        <end position="1140"/>
    </location>
</feature>
<feature type="disulfide bond" evidence="1">
    <location>
        <begin position="1217"/>
        <end position="1233"/>
    </location>
</feature>
<feature type="disulfide bond" evidence="1">
    <location>
        <begin position="1309"/>
        <end position="1376"/>
    </location>
</feature>
<feature type="disulfide bond" evidence="1">
    <location>
        <begin position="1339"/>
        <end position="1355"/>
    </location>
</feature>
<feature type="disulfide bond" evidence="1">
    <location>
        <begin position="1366"/>
        <end position="1394"/>
    </location>
</feature>
<feature type="non-terminal residue">
    <location>
        <position position="1"/>
    </location>
</feature>
<evidence type="ECO:0000250" key="1"/>
<evidence type="ECO:0000255" key="2">
    <source>
        <dbReference type="PROSITE-ProRule" id="PRU00121"/>
    </source>
</evidence>
<evidence type="ECO:0000255" key="3">
    <source>
        <dbReference type="PROSITE-ProRule" id="PRU00274"/>
    </source>
</evidence>
<evidence type="ECO:0000256" key="4">
    <source>
        <dbReference type="SAM" id="MobiDB-lite"/>
    </source>
</evidence>
<evidence type="ECO:0000269" key="5">
    <source>
    </source>
</evidence>
<proteinExistence type="evidence at transcript level"/>
<sequence length="1420" mass="158368">PNVRWEYCNLTQCSDAEGTAVAPPNVTPVPSLEAPSEQAPTEQRPGVQECYHGNGQSYRGTYFTTVTGRTCQAWSSMTPHSHSRTPENYPNGGLIRNYCRNPDPVAAPYCYTMDPNVRWEYCNLTQCSDAEGIAVTPLTVTPVPSLEAPSKQAPTEQRPGVQECYHGNGQSYRGTYFTTVTGRTCQAWSSMTPHSHSRTPENYPNGGLIRNYCRNPDPVAAPYCYTMDPNVRWEYCNLTQCSDAEGTAVAPPNVTPVPSLEAPSEQAPTEQRSGVQECYHGNGQSYRGTYFTTVTGRTCQAWSSMKPHSHSRTPENYPNGGLIRNYCRNPDPVAAPYCYTMDPNVRWEYCNLTQCSDAEGTAVAPPNVTPVPSLEAPSEQAPTEQRLGVQECYHSNGQSYRGTYFTTVTGRTCQAWSSMTPHSHSRTPENYPNAGLVKNYCRNPDPVAAPWCYTTDPSVRWEYCNLTRCSDAEGTAVMPPNIIPVPSLEAFLEQEPTEETPGVQECYYHYGQSYRGTYSTTVTGRTCQAWSSMTPHQHSRTPKNYPNAGLTRNYCRNPDAEIRPWCYTMDPSVRWEYCNLTQCLVTESSVLETLTVVPDPSTQASSEEAPTEQSPEVQDCYHGDGQSYRGSFSTTVTGRTCQSWSSMTPHWHQRTTEYYPDGGLTRNYCRNPDAEIRPWCYTMDPSVRWEYCNLTQCPVTESSVLATSMAVSEQAPMEQSPGVQDCYHGDGQSYRGSFSTTVTGRICQSWSSMTPHWHQRTIEYYPNGGLTKNYCRNPDAEIRPWCYTMDPRVRWEYCNLTQCVVMESSVLATPMVVPVPSREVPSEEAPTENSPGVQDCYQGDGQSYRGTFSTTITGRTCQSWLSMTPHRHRRIPLRYPNAGLTRNYCRNRDAEIRPWCYTMDPSVRWEYCNLTQCPVTESSVLTTPTVVPVPSTEAPSEQAPPEKSPVVQDCYHGDGQSYRGTSSTTVTGRNCQSWSSMIPHWHQRTPENYPNAGLTRNYCRNPDSGKHPWCYTTDPCVRWEYCNLTQCSETESGVLETPTVVPVPSMEAHSEAAPTEQTPVVQQCYHGNGQSYRGTFSTTVTGRTCQSWSSMTPHQHKRTPENHPNDDLTMNYCRNPDADTGPWCFTMDPSVRREYCNLTRCSDTEGTVVTPPTVIPVPSLEAPSEQASSSFDCGKPQVEPKKCPGSIVGGCVAHPHSWPWQVSLRTRFGKHFCGGTLISPEWVLTAACCLETFSRPSFYKVILGAHQEVNLESHVQEIEVSRLFLEPIGADIALLKLSRPAIITDKVIPACLPSPNYVITAWTECYITGWGETQGTFGAGLLKEAQLHVIENTVCNHYEFLNGRVKSTELCAGHLAGGTDRCQGDNGGPVVCFDKDKYILRGITSWGPGCACPNKPGVYVRVSSFVTWIEGVMRNN</sequence>
<accession>P14417</accession>